<dbReference type="EC" id="2.3.1.275" evidence="1"/>
<dbReference type="EMBL" id="AE016877">
    <property type="protein sequence ID" value="AAP09361.1"/>
    <property type="molecule type" value="Genomic_DNA"/>
</dbReference>
<dbReference type="RefSeq" id="NP_832160.1">
    <property type="nucleotide sequence ID" value="NC_004722.1"/>
</dbReference>
<dbReference type="SMR" id="Q81DG8"/>
<dbReference type="STRING" id="226900.BC_2398"/>
<dbReference type="KEGG" id="bce:BC2398"/>
<dbReference type="PATRIC" id="fig|226900.8.peg.2426"/>
<dbReference type="HOGENOM" id="CLU_081254_7_0_9"/>
<dbReference type="OrthoDB" id="9777124at2"/>
<dbReference type="UniPathway" id="UPA00085"/>
<dbReference type="Proteomes" id="UP000001417">
    <property type="component" value="Chromosome"/>
</dbReference>
<dbReference type="GO" id="GO:0005886">
    <property type="term" value="C:plasma membrane"/>
    <property type="evidence" value="ECO:0000318"/>
    <property type="project" value="GO_Central"/>
</dbReference>
<dbReference type="GO" id="GO:0043772">
    <property type="term" value="F:acyl-phosphate glycerol-3-phosphate acyltransferase activity"/>
    <property type="evidence" value="ECO:0007669"/>
    <property type="project" value="UniProtKB-UniRule"/>
</dbReference>
<dbReference type="GO" id="GO:0008654">
    <property type="term" value="P:phospholipid biosynthetic process"/>
    <property type="evidence" value="ECO:0007669"/>
    <property type="project" value="UniProtKB-UniRule"/>
</dbReference>
<dbReference type="HAMAP" id="MF_01043">
    <property type="entry name" value="PlsY"/>
    <property type="match status" value="1"/>
</dbReference>
<dbReference type="InterPro" id="IPR003811">
    <property type="entry name" value="G3P_acylTferase_PlsY"/>
</dbReference>
<dbReference type="NCBIfam" id="NF001254">
    <property type="entry name" value="PRK00220.2-1"/>
    <property type="match status" value="1"/>
</dbReference>
<dbReference type="PANTHER" id="PTHR30309:SF0">
    <property type="entry name" value="GLYCEROL-3-PHOSPHATE ACYLTRANSFERASE-RELATED"/>
    <property type="match status" value="1"/>
</dbReference>
<dbReference type="PANTHER" id="PTHR30309">
    <property type="entry name" value="INNER MEMBRANE PROTEIN YGIH"/>
    <property type="match status" value="1"/>
</dbReference>
<dbReference type="Pfam" id="PF02660">
    <property type="entry name" value="G3P_acyltransf"/>
    <property type="match status" value="1"/>
</dbReference>
<dbReference type="SMART" id="SM01207">
    <property type="entry name" value="G3P_acyltransf"/>
    <property type="match status" value="1"/>
</dbReference>
<comment type="function">
    <text evidence="1">Catalyzes the transfer of an acyl group from acyl-phosphate (acyl-PO(4)) to glycerol-3-phosphate (G3P) to form lysophosphatidic acid (LPA). This enzyme utilizes acyl-phosphate as fatty acyl donor, but not acyl-CoA or acyl-ACP.</text>
</comment>
<comment type="catalytic activity">
    <reaction evidence="1">
        <text>an acyl phosphate + sn-glycerol 3-phosphate = a 1-acyl-sn-glycero-3-phosphate + phosphate</text>
        <dbReference type="Rhea" id="RHEA:34075"/>
        <dbReference type="ChEBI" id="CHEBI:43474"/>
        <dbReference type="ChEBI" id="CHEBI:57597"/>
        <dbReference type="ChEBI" id="CHEBI:57970"/>
        <dbReference type="ChEBI" id="CHEBI:59918"/>
        <dbReference type="EC" id="2.3.1.275"/>
    </reaction>
</comment>
<comment type="pathway">
    <text evidence="1">Lipid metabolism; phospholipid metabolism.</text>
</comment>
<comment type="subunit">
    <text evidence="1">Probably interacts with PlsX.</text>
</comment>
<comment type="subcellular location">
    <subcellularLocation>
        <location evidence="1">Cell membrane</location>
        <topology evidence="1">Multi-pass membrane protein</topology>
    </subcellularLocation>
</comment>
<comment type="similarity">
    <text evidence="1">Belongs to the PlsY family.</text>
</comment>
<sequence>MINSMQFLYLVASYLIGNILTAYIVTKLRHNVDIRDEGSGNPGARNMGRVYGKGYFIATFLGDAIKGAIVVAVAKYLFEDPTFVMLTLLAVIIGHIYPVLFKGKGGKGISTFIGGLIAFDYLIALTLLGIFIVFYLIFKGFTKPGLITIACLPICMILYSYSIVTTILSGIIIVLILYVNRE</sequence>
<gene>
    <name evidence="1" type="primary">plsY1</name>
    <name type="ordered locus">BC_2398</name>
</gene>
<organism>
    <name type="scientific">Bacillus cereus (strain ATCC 14579 / DSM 31 / CCUG 7414 / JCM 2152 / NBRC 15305 / NCIMB 9373 / NCTC 2599 / NRRL B-3711)</name>
    <dbReference type="NCBI Taxonomy" id="226900"/>
    <lineage>
        <taxon>Bacteria</taxon>
        <taxon>Bacillati</taxon>
        <taxon>Bacillota</taxon>
        <taxon>Bacilli</taxon>
        <taxon>Bacillales</taxon>
        <taxon>Bacillaceae</taxon>
        <taxon>Bacillus</taxon>
        <taxon>Bacillus cereus group</taxon>
    </lineage>
</organism>
<accession>Q81DG8</accession>
<reference key="1">
    <citation type="journal article" date="2003" name="Nature">
        <title>Genome sequence of Bacillus cereus and comparative analysis with Bacillus anthracis.</title>
        <authorList>
            <person name="Ivanova N."/>
            <person name="Sorokin A."/>
            <person name="Anderson I."/>
            <person name="Galleron N."/>
            <person name="Candelon B."/>
            <person name="Kapatral V."/>
            <person name="Bhattacharyya A."/>
            <person name="Reznik G."/>
            <person name="Mikhailova N."/>
            <person name="Lapidus A."/>
            <person name="Chu L."/>
            <person name="Mazur M."/>
            <person name="Goltsman E."/>
            <person name="Larsen N."/>
            <person name="D'Souza M."/>
            <person name="Walunas T."/>
            <person name="Grechkin Y."/>
            <person name="Pusch G."/>
            <person name="Haselkorn R."/>
            <person name="Fonstein M."/>
            <person name="Ehrlich S.D."/>
            <person name="Overbeek R."/>
            <person name="Kyrpides N.C."/>
        </authorList>
    </citation>
    <scope>NUCLEOTIDE SEQUENCE [LARGE SCALE GENOMIC DNA]</scope>
    <source>
        <strain>ATCC 14579 / DSM 31 / CCUG 7414 / JCM 2152 / NBRC 15305 / NCIMB 9373 / NCTC 2599 / NRRL B-3711</strain>
    </source>
</reference>
<feature type="chain" id="PRO_0000188319" description="Glycerol-3-phosphate acyltransferase 1">
    <location>
        <begin position="1"/>
        <end position="182"/>
    </location>
</feature>
<feature type="transmembrane region" description="Helical" evidence="1">
    <location>
        <begin position="5"/>
        <end position="25"/>
    </location>
</feature>
<feature type="transmembrane region" description="Helical" evidence="1">
    <location>
        <begin position="54"/>
        <end position="74"/>
    </location>
</feature>
<feature type="transmembrane region" description="Helical" evidence="1">
    <location>
        <begin position="81"/>
        <end position="101"/>
    </location>
</feature>
<feature type="transmembrane region" description="Helical" evidence="1">
    <location>
        <begin position="117"/>
        <end position="137"/>
    </location>
</feature>
<feature type="transmembrane region" description="Helical" evidence="1">
    <location>
        <begin position="157"/>
        <end position="177"/>
    </location>
</feature>
<protein>
    <recommendedName>
        <fullName evidence="1">Glycerol-3-phosphate acyltransferase 1</fullName>
    </recommendedName>
    <alternativeName>
        <fullName evidence="1">Acyl-PO4 G3P acyltransferase 1</fullName>
    </alternativeName>
    <alternativeName>
        <fullName evidence="1">Acyl-phosphate--glycerol-3-phosphate acyltransferase 1</fullName>
    </alternativeName>
    <alternativeName>
        <fullName evidence="1">G3P acyltransferase 1</fullName>
        <shortName evidence="1">GPAT 1</shortName>
        <ecNumber evidence="1">2.3.1.275</ecNumber>
    </alternativeName>
    <alternativeName>
        <fullName evidence="1">Lysophosphatidic acid synthase 1</fullName>
        <shortName evidence="1">LPA synthase 1</shortName>
    </alternativeName>
</protein>
<name>PLSY1_BACCR</name>
<keyword id="KW-1003">Cell membrane</keyword>
<keyword id="KW-0444">Lipid biosynthesis</keyword>
<keyword id="KW-0443">Lipid metabolism</keyword>
<keyword id="KW-0472">Membrane</keyword>
<keyword id="KW-0594">Phospholipid biosynthesis</keyword>
<keyword id="KW-1208">Phospholipid metabolism</keyword>
<keyword id="KW-1185">Reference proteome</keyword>
<keyword id="KW-0808">Transferase</keyword>
<keyword id="KW-0812">Transmembrane</keyword>
<keyword id="KW-1133">Transmembrane helix</keyword>
<proteinExistence type="inferred from homology"/>
<evidence type="ECO:0000255" key="1">
    <source>
        <dbReference type="HAMAP-Rule" id="MF_01043"/>
    </source>
</evidence>